<dbReference type="EMBL" id="AY780259">
    <property type="protein sequence ID" value="AAX21044.1"/>
    <property type="molecule type" value="Genomic_DNA"/>
</dbReference>
<dbReference type="RefSeq" id="YP_636314.1">
    <property type="nucleotide sequence ID" value="NC_008115.1"/>
</dbReference>
<dbReference type="SMR" id="Q49KY3"/>
<dbReference type="GeneID" id="4108468"/>
<dbReference type="GO" id="GO:0009535">
    <property type="term" value="C:chloroplast thylakoid membrane"/>
    <property type="evidence" value="ECO:0007669"/>
    <property type="project" value="UniProtKB-SubCell"/>
</dbReference>
<dbReference type="GO" id="GO:0009539">
    <property type="term" value="C:photosystem II reaction center"/>
    <property type="evidence" value="ECO:0007669"/>
    <property type="project" value="InterPro"/>
</dbReference>
<dbReference type="GO" id="GO:0009055">
    <property type="term" value="F:electron transfer activity"/>
    <property type="evidence" value="ECO:0007669"/>
    <property type="project" value="UniProtKB-UniRule"/>
</dbReference>
<dbReference type="GO" id="GO:0020037">
    <property type="term" value="F:heme binding"/>
    <property type="evidence" value="ECO:0007669"/>
    <property type="project" value="InterPro"/>
</dbReference>
<dbReference type="GO" id="GO:0005506">
    <property type="term" value="F:iron ion binding"/>
    <property type="evidence" value="ECO:0007669"/>
    <property type="project" value="UniProtKB-UniRule"/>
</dbReference>
<dbReference type="GO" id="GO:0009767">
    <property type="term" value="P:photosynthetic electron transport chain"/>
    <property type="evidence" value="ECO:0007669"/>
    <property type="project" value="InterPro"/>
</dbReference>
<dbReference type="HAMAP" id="MF_00643">
    <property type="entry name" value="PSII_PsbF"/>
    <property type="match status" value="1"/>
</dbReference>
<dbReference type="InterPro" id="IPR006241">
    <property type="entry name" value="PSII_cyt_b559_bsu"/>
</dbReference>
<dbReference type="InterPro" id="IPR006216">
    <property type="entry name" value="PSII_cyt_b559_CS"/>
</dbReference>
<dbReference type="InterPro" id="IPR013081">
    <property type="entry name" value="PSII_cyt_b559_N"/>
</dbReference>
<dbReference type="NCBIfam" id="TIGR01333">
    <property type="entry name" value="cyt_b559_beta"/>
    <property type="match status" value="1"/>
</dbReference>
<dbReference type="Pfam" id="PF00283">
    <property type="entry name" value="Cytochrom_B559"/>
    <property type="match status" value="1"/>
</dbReference>
<dbReference type="PIRSF" id="PIRSF000037">
    <property type="entry name" value="PsbF"/>
    <property type="match status" value="1"/>
</dbReference>
<dbReference type="SUPFAM" id="SSF161045">
    <property type="entry name" value="Cytochrome b559 subunits"/>
    <property type="match status" value="1"/>
</dbReference>
<dbReference type="PROSITE" id="PS00537">
    <property type="entry name" value="CYTOCHROME_B559"/>
    <property type="match status" value="1"/>
</dbReference>
<evidence type="ECO:0000255" key="1">
    <source>
        <dbReference type="HAMAP-Rule" id="MF_00643"/>
    </source>
</evidence>
<organism>
    <name type="scientific">Eucalyptus globulus subsp. globulus</name>
    <name type="common">Tasmanian blue gum</name>
    <dbReference type="NCBI Taxonomy" id="71271"/>
    <lineage>
        <taxon>Eukaryota</taxon>
        <taxon>Viridiplantae</taxon>
        <taxon>Streptophyta</taxon>
        <taxon>Embryophyta</taxon>
        <taxon>Tracheophyta</taxon>
        <taxon>Spermatophyta</taxon>
        <taxon>Magnoliopsida</taxon>
        <taxon>eudicotyledons</taxon>
        <taxon>Gunneridae</taxon>
        <taxon>Pentapetalae</taxon>
        <taxon>rosids</taxon>
        <taxon>malvids</taxon>
        <taxon>Myrtales</taxon>
        <taxon>Myrtaceae</taxon>
        <taxon>Myrtoideae</taxon>
        <taxon>Eucalypteae</taxon>
        <taxon>Eucalyptus</taxon>
    </lineage>
</organism>
<sequence length="39" mass="4424">MTIDRTYPIFTVRWLAVHGLAVPTVSFLGSISAMQFIQR</sequence>
<protein>
    <recommendedName>
        <fullName evidence="1">Cytochrome b559 subunit beta</fullName>
    </recommendedName>
    <alternativeName>
        <fullName evidence="1">PSII reaction center subunit VI</fullName>
    </alternativeName>
</protein>
<name>PSBF_EUCGG</name>
<gene>
    <name evidence="1" type="primary">psbF</name>
</gene>
<keyword id="KW-0150">Chloroplast</keyword>
<keyword id="KW-0249">Electron transport</keyword>
<keyword id="KW-0349">Heme</keyword>
<keyword id="KW-0408">Iron</keyword>
<keyword id="KW-0472">Membrane</keyword>
<keyword id="KW-0479">Metal-binding</keyword>
<keyword id="KW-0602">Photosynthesis</keyword>
<keyword id="KW-0604">Photosystem II</keyword>
<keyword id="KW-0934">Plastid</keyword>
<keyword id="KW-0793">Thylakoid</keyword>
<keyword id="KW-0812">Transmembrane</keyword>
<keyword id="KW-1133">Transmembrane helix</keyword>
<keyword id="KW-0813">Transport</keyword>
<comment type="function">
    <text evidence="1">This b-type cytochrome is tightly associated with the reaction center of photosystem II (PSII). PSII is a light-driven water:plastoquinone oxidoreductase that uses light energy to abstract electrons from H(2)O, generating O(2) and a proton gradient subsequently used for ATP formation. It consists of a core antenna complex that captures photons, and an electron transfer chain that converts photonic excitation into a charge separation.</text>
</comment>
<comment type="cofactor">
    <cofactor evidence="1">
        <name>heme b</name>
        <dbReference type="ChEBI" id="CHEBI:60344"/>
    </cofactor>
    <text evidence="1">With its partner (PsbE) binds heme. PSII binds additional chlorophylls, carotenoids and specific lipids.</text>
</comment>
<comment type="subunit">
    <text evidence="1">Heterodimer of an alpha subunit and a beta subunit. PSII is composed of 1 copy each of membrane proteins PsbA, PsbB, PsbC, PsbD, PsbE, PsbF, PsbH, PsbI, PsbJ, PsbK, PsbL, PsbM, PsbT, PsbX, PsbY, PsbZ, Psb30/Ycf12, at least 3 peripheral proteins of the oxygen-evolving complex and a large number of cofactors. It forms dimeric complexes.</text>
</comment>
<comment type="subcellular location">
    <subcellularLocation>
        <location evidence="1">Plastid</location>
        <location evidence="1">Chloroplast thylakoid membrane</location>
        <topology evidence="1">Single-pass membrane protein</topology>
    </subcellularLocation>
</comment>
<comment type="similarity">
    <text evidence="1">Belongs to the PsbE/PsbF family.</text>
</comment>
<accession>Q49KY3</accession>
<reference key="1">
    <citation type="journal article" date="2005" name="DNA Res.">
        <title>Complete nucleotide sequence of the chloroplast genome from the Tasmanian blue gum, Eucalyptus globulus (Myrtaceae).</title>
        <authorList>
            <person name="Steane D.A."/>
        </authorList>
    </citation>
    <scope>NUCLEOTIDE SEQUENCE [LARGE SCALE GENOMIC DNA]</scope>
</reference>
<proteinExistence type="inferred from homology"/>
<geneLocation type="chloroplast"/>
<feature type="chain" id="PRO_0000233640" description="Cytochrome b559 subunit beta">
    <location>
        <begin position="1"/>
        <end position="39"/>
    </location>
</feature>
<feature type="transmembrane region" description="Helical" evidence="1">
    <location>
        <begin position="14"/>
        <end position="30"/>
    </location>
</feature>
<feature type="binding site" description="axial binding residue" evidence="1">
    <location>
        <position position="18"/>
    </location>
    <ligand>
        <name>heme</name>
        <dbReference type="ChEBI" id="CHEBI:30413"/>
        <note>ligand shared with alpha subunit</note>
    </ligand>
    <ligandPart>
        <name>Fe</name>
        <dbReference type="ChEBI" id="CHEBI:18248"/>
    </ligandPart>
</feature>